<reference key="1">
    <citation type="journal article" date="2005" name="Nucleic Acids Res.">
        <title>Genomic blueprint of Hahella chejuensis, a marine microbe producing an algicidal agent.</title>
        <authorList>
            <person name="Jeong H."/>
            <person name="Yim J.H."/>
            <person name="Lee C."/>
            <person name="Choi S.-H."/>
            <person name="Park Y.K."/>
            <person name="Yoon S.H."/>
            <person name="Hur C.-G."/>
            <person name="Kang H.-Y."/>
            <person name="Kim D."/>
            <person name="Lee H.H."/>
            <person name="Park K.H."/>
            <person name="Park S.-H."/>
            <person name="Park H.-S."/>
            <person name="Lee H.K."/>
            <person name="Oh T.K."/>
            <person name="Kim J.F."/>
        </authorList>
    </citation>
    <scope>NUCLEOTIDE SEQUENCE [LARGE SCALE GENOMIC DNA]</scope>
    <source>
        <strain>KCTC 2396</strain>
    </source>
</reference>
<name>IHFB_HAHCH</name>
<feature type="chain" id="PRO_1000060609" description="Integration host factor subunit beta">
    <location>
        <begin position="1"/>
        <end position="98"/>
    </location>
</feature>
<sequence>MTKSELVEIIAQKQPQLSIKDVELAVKTIIEYMSQSLSQGQRIEIRGFGSFSLHYRAPRVGRNPKTGETVHLPAKYVPHFKPGKELRDEVNASLKAGY</sequence>
<keyword id="KW-0233">DNA recombination</keyword>
<keyword id="KW-0238">DNA-binding</keyword>
<keyword id="KW-1185">Reference proteome</keyword>
<keyword id="KW-0804">Transcription</keyword>
<keyword id="KW-0805">Transcription regulation</keyword>
<keyword id="KW-0810">Translation regulation</keyword>
<gene>
    <name evidence="1" type="primary">ihfB</name>
    <name evidence="1" type="synonym">himD</name>
    <name type="ordered locus">HCH_04977</name>
</gene>
<organism>
    <name type="scientific">Hahella chejuensis (strain KCTC 2396)</name>
    <dbReference type="NCBI Taxonomy" id="349521"/>
    <lineage>
        <taxon>Bacteria</taxon>
        <taxon>Pseudomonadati</taxon>
        <taxon>Pseudomonadota</taxon>
        <taxon>Gammaproteobacteria</taxon>
        <taxon>Oceanospirillales</taxon>
        <taxon>Hahellaceae</taxon>
        <taxon>Hahella</taxon>
    </lineage>
</organism>
<accession>Q2SCF7</accession>
<dbReference type="EMBL" id="CP000155">
    <property type="protein sequence ID" value="ABC31667.1"/>
    <property type="molecule type" value="Genomic_DNA"/>
</dbReference>
<dbReference type="RefSeq" id="WP_011398732.1">
    <property type="nucleotide sequence ID" value="NC_007645.1"/>
</dbReference>
<dbReference type="SMR" id="Q2SCF7"/>
<dbReference type="STRING" id="349521.HCH_04977"/>
<dbReference type="KEGG" id="hch:HCH_04977"/>
<dbReference type="eggNOG" id="COG0776">
    <property type="taxonomic scope" value="Bacteria"/>
</dbReference>
<dbReference type="HOGENOM" id="CLU_105066_2_0_6"/>
<dbReference type="OrthoDB" id="9804203at2"/>
<dbReference type="Proteomes" id="UP000000238">
    <property type="component" value="Chromosome"/>
</dbReference>
<dbReference type="GO" id="GO:0005694">
    <property type="term" value="C:chromosome"/>
    <property type="evidence" value="ECO:0007669"/>
    <property type="project" value="InterPro"/>
</dbReference>
<dbReference type="GO" id="GO:0005829">
    <property type="term" value="C:cytosol"/>
    <property type="evidence" value="ECO:0007669"/>
    <property type="project" value="TreeGrafter"/>
</dbReference>
<dbReference type="GO" id="GO:0003677">
    <property type="term" value="F:DNA binding"/>
    <property type="evidence" value="ECO:0007669"/>
    <property type="project" value="UniProtKB-UniRule"/>
</dbReference>
<dbReference type="GO" id="GO:0030527">
    <property type="term" value="F:structural constituent of chromatin"/>
    <property type="evidence" value="ECO:0007669"/>
    <property type="project" value="InterPro"/>
</dbReference>
<dbReference type="GO" id="GO:0006310">
    <property type="term" value="P:DNA recombination"/>
    <property type="evidence" value="ECO:0007669"/>
    <property type="project" value="UniProtKB-UniRule"/>
</dbReference>
<dbReference type="GO" id="GO:0006355">
    <property type="term" value="P:regulation of DNA-templated transcription"/>
    <property type="evidence" value="ECO:0007669"/>
    <property type="project" value="UniProtKB-UniRule"/>
</dbReference>
<dbReference type="GO" id="GO:0006417">
    <property type="term" value="P:regulation of translation"/>
    <property type="evidence" value="ECO:0007669"/>
    <property type="project" value="UniProtKB-UniRule"/>
</dbReference>
<dbReference type="CDD" id="cd13836">
    <property type="entry name" value="IHF_B"/>
    <property type="match status" value="1"/>
</dbReference>
<dbReference type="FunFam" id="4.10.520.10:FF:000003">
    <property type="entry name" value="Integration host factor subunit beta"/>
    <property type="match status" value="1"/>
</dbReference>
<dbReference type="Gene3D" id="4.10.520.10">
    <property type="entry name" value="IHF-like DNA-binding proteins"/>
    <property type="match status" value="1"/>
</dbReference>
<dbReference type="HAMAP" id="MF_00381">
    <property type="entry name" value="IHF_beta"/>
    <property type="match status" value="1"/>
</dbReference>
<dbReference type="InterPro" id="IPR000119">
    <property type="entry name" value="Hist_DNA-bd"/>
</dbReference>
<dbReference type="InterPro" id="IPR020816">
    <property type="entry name" value="Histone-like_DNA-bd_CS"/>
</dbReference>
<dbReference type="InterPro" id="IPR010992">
    <property type="entry name" value="IHF-like_DNA-bd_dom_sf"/>
</dbReference>
<dbReference type="InterPro" id="IPR005685">
    <property type="entry name" value="IHF_beta"/>
</dbReference>
<dbReference type="NCBIfam" id="TIGR00988">
    <property type="entry name" value="hip"/>
    <property type="match status" value="1"/>
</dbReference>
<dbReference type="NCBIfam" id="NF001222">
    <property type="entry name" value="PRK00199.1"/>
    <property type="match status" value="1"/>
</dbReference>
<dbReference type="PANTHER" id="PTHR33175">
    <property type="entry name" value="DNA-BINDING PROTEIN HU"/>
    <property type="match status" value="1"/>
</dbReference>
<dbReference type="PANTHER" id="PTHR33175:SF5">
    <property type="entry name" value="INTEGRATION HOST FACTOR SUBUNIT BETA"/>
    <property type="match status" value="1"/>
</dbReference>
<dbReference type="Pfam" id="PF00216">
    <property type="entry name" value="Bac_DNA_binding"/>
    <property type="match status" value="1"/>
</dbReference>
<dbReference type="PRINTS" id="PR01727">
    <property type="entry name" value="DNABINDINGHU"/>
</dbReference>
<dbReference type="SMART" id="SM00411">
    <property type="entry name" value="BHL"/>
    <property type="match status" value="1"/>
</dbReference>
<dbReference type="SUPFAM" id="SSF47729">
    <property type="entry name" value="IHF-like DNA-binding proteins"/>
    <property type="match status" value="1"/>
</dbReference>
<dbReference type="PROSITE" id="PS00045">
    <property type="entry name" value="HISTONE_LIKE"/>
    <property type="match status" value="1"/>
</dbReference>
<proteinExistence type="inferred from homology"/>
<comment type="function">
    <text evidence="1">This protein is one of the two subunits of integration host factor, a specific DNA-binding protein that functions in genetic recombination as well as in transcriptional and translational control.</text>
</comment>
<comment type="subunit">
    <text evidence="1">Heterodimer of an alpha and a beta chain.</text>
</comment>
<comment type="similarity">
    <text evidence="1">Belongs to the bacterial histone-like protein family.</text>
</comment>
<protein>
    <recommendedName>
        <fullName evidence="1">Integration host factor subunit beta</fullName>
        <shortName evidence="1">IHF-beta</shortName>
    </recommendedName>
</protein>
<evidence type="ECO:0000255" key="1">
    <source>
        <dbReference type="HAMAP-Rule" id="MF_00381"/>
    </source>
</evidence>